<gene>
    <name type="primary">ubc12</name>
    <name type="ORF">SPCC777.10c</name>
</gene>
<name>UBC12_SCHPO</name>
<reference key="1">
    <citation type="journal article" date="2002" name="Nature">
        <title>The genome sequence of Schizosaccharomyces pombe.</title>
        <authorList>
            <person name="Wood V."/>
            <person name="Gwilliam R."/>
            <person name="Rajandream M.A."/>
            <person name="Lyne M.H."/>
            <person name="Lyne R."/>
            <person name="Stewart A."/>
            <person name="Sgouros J.G."/>
            <person name="Peat N."/>
            <person name="Hayles J."/>
            <person name="Baker S.G."/>
            <person name="Basham D."/>
            <person name="Bowman S."/>
            <person name="Brooks K."/>
            <person name="Brown D."/>
            <person name="Brown S."/>
            <person name="Chillingworth T."/>
            <person name="Churcher C.M."/>
            <person name="Collins M."/>
            <person name="Connor R."/>
            <person name="Cronin A."/>
            <person name="Davis P."/>
            <person name="Feltwell T."/>
            <person name="Fraser A."/>
            <person name="Gentles S."/>
            <person name="Goble A."/>
            <person name="Hamlin N."/>
            <person name="Harris D.E."/>
            <person name="Hidalgo J."/>
            <person name="Hodgson G."/>
            <person name="Holroyd S."/>
            <person name="Hornsby T."/>
            <person name="Howarth S."/>
            <person name="Huckle E.J."/>
            <person name="Hunt S."/>
            <person name="Jagels K."/>
            <person name="James K.D."/>
            <person name="Jones L."/>
            <person name="Jones M."/>
            <person name="Leather S."/>
            <person name="McDonald S."/>
            <person name="McLean J."/>
            <person name="Mooney P."/>
            <person name="Moule S."/>
            <person name="Mungall K.L."/>
            <person name="Murphy L.D."/>
            <person name="Niblett D."/>
            <person name="Odell C."/>
            <person name="Oliver K."/>
            <person name="O'Neil S."/>
            <person name="Pearson D."/>
            <person name="Quail M.A."/>
            <person name="Rabbinowitsch E."/>
            <person name="Rutherford K.M."/>
            <person name="Rutter S."/>
            <person name="Saunders D."/>
            <person name="Seeger K."/>
            <person name="Sharp S."/>
            <person name="Skelton J."/>
            <person name="Simmonds M.N."/>
            <person name="Squares R."/>
            <person name="Squares S."/>
            <person name="Stevens K."/>
            <person name="Taylor K."/>
            <person name="Taylor R.G."/>
            <person name="Tivey A."/>
            <person name="Walsh S.V."/>
            <person name="Warren T."/>
            <person name="Whitehead S."/>
            <person name="Woodward J.R."/>
            <person name="Volckaert G."/>
            <person name="Aert R."/>
            <person name="Robben J."/>
            <person name="Grymonprez B."/>
            <person name="Weltjens I."/>
            <person name="Vanstreels E."/>
            <person name="Rieger M."/>
            <person name="Schaefer M."/>
            <person name="Mueller-Auer S."/>
            <person name="Gabel C."/>
            <person name="Fuchs M."/>
            <person name="Duesterhoeft A."/>
            <person name="Fritzc C."/>
            <person name="Holzer E."/>
            <person name="Moestl D."/>
            <person name="Hilbert H."/>
            <person name="Borzym K."/>
            <person name="Langer I."/>
            <person name="Beck A."/>
            <person name="Lehrach H."/>
            <person name="Reinhardt R."/>
            <person name="Pohl T.M."/>
            <person name="Eger P."/>
            <person name="Zimmermann W."/>
            <person name="Wedler H."/>
            <person name="Wambutt R."/>
            <person name="Purnelle B."/>
            <person name="Goffeau A."/>
            <person name="Cadieu E."/>
            <person name="Dreano S."/>
            <person name="Gloux S."/>
            <person name="Lelaure V."/>
            <person name="Mottier S."/>
            <person name="Galibert F."/>
            <person name="Aves S.J."/>
            <person name="Xiang Z."/>
            <person name="Hunt C."/>
            <person name="Moore K."/>
            <person name="Hurst S.M."/>
            <person name="Lucas M."/>
            <person name="Rochet M."/>
            <person name="Gaillardin C."/>
            <person name="Tallada V.A."/>
            <person name="Garzon A."/>
            <person name="Thode G."/>
            <person name="Daga R.R."/>
            <person name="Cruzado L."/>
            <person name="Jimenez J."/>
            <person name="Sanchez M."/>
            <person name="del Rey F."/>
            <person name="Benito J."/>
            <person name="Dominguez A."/>
            <person name="Revuelta J.L."/>
            <person name="Moreno S."/>
            <person name="Armstrong J."/>
            <person name="Forsburg S.L."/>
            <person name="Cerutti L."/>
            <person name="Lowe T."/>
            <person name="McCombie W.R."/>
            <person name="Paulsen I."/>
            <person name="Potashkin J."/>
            <person name="Shpakovski G.V."/>
            <person name="Ussery D."/>
            <person name="Barrell B.G."/>
            <person name="Nurse P."/>
        </authorList>
    </citation>
    <scope>NUCLEOTIDE SEQUENCE [LARGE SCALE GENOMIC DNA]</scope>
    <source>
        <strain>972 / ATCC 24843</strain>
    </source>
</reference>
<feature type="chain" id="PRO_0000082499" description="NEDD8-conjugating enzyme ubc12">
    <location>
        <begin position="1"/>
        <end position="177"/>
    </location>
</feature>
<feature type="domain" description="UBC core" evidence="2">
    <location>
        <begin position="23"/>
        <end position="167"/>
    </location>
</feature>
<feature type="active site" description="Glycyl thioester intermediate" evidence="2 3">
    <location>
        <position position="105"/>
    </location>
</feature>
<dbReference type="EC" id="2.3.2.34"/>
<dbReference type="EMBL" id="CU329672">
    <property type="protein sequence ID" value="CAA20714.1"/>
    <property type="molecule type" value="Genomic_DNA"/>
</dbReference>
<dbReference type="PIR" id="T11716">
    <property type="entry name" value="T11716"/>
</dbReference>
<dbReference type="RefSeq" id="NP_588256.1">
    <property type="nucleotide sequence ID" value="NM_001023246.2"/>
</dbReference>
<dbReference type="SMR" id="O74549"/>
<dbReference type="BioGRID" id="275981">
    <property type="interactions" value="2"/>
</dbReference>
<dbReference type="FunCoup" id="O74549">
    <property type="interactions" value="1085"/>
</dbReference>
<dbReference type="STRING" id="284812.O74549"/>
<dbReference type="PaxDb" id="4896-SPCC777.10c.1"/>
<dbReference type="EnsemblFungi" id="SPCC777.10c.1">
    <property type="protein sequence ID" value="SPCC777.10c.1:pep"/>
    <property type="gene ID" value="SPCC777.10c"/>
</dbReference>
<dbReference type="GeneID" id="2539416"/>
<dbReference type="KEGG" id="spo:2539416"/>
<dbReference type="PomBase" id="SPCC777.10c">
    <property type="gene designation" value="ubc12"/>
</dbReference>
<dbReference type="VEuPathDB" id="FungiDB:SPCC777.10c"/>
<dbReference type="eggNOG" id="KOG0420">
    <property type="taxonomic scope" value="Eukaryota"/>
</dbReference>
<dbReference type="HOGENOM" id="CLU_030988_6_0_1"/>
<dbReference type="InParanoid" id="O74549"/>
<dbReference type="OMA" id="CQVDFPD"/>
<dbReference type="PhylomeDB" id="O74549"/>
<dbReference type="Reactome" id="R-SPO-8951664">
    <property type="pathway name" value="Neddylation"/>
</dbReference>
<dbReference type="Reactome" id="R-SPO-983168">
    <property type="pathway name" value="Antigen processing: Ubiquitination &amp; Proteasome degradation"/>
</dbReference>
<dbReference type="UniPathway" id="UPA00885"/>
<dbReference type="PRO" id="PR:O74549"/>
<dbReference type="Proteomes" id="UP000002485">
    <property type="component" value="Chromosome III"/>
</dbReference>
<dbReference type="GO" id="GO:0005829">
    <property type="term" value="C:cytosol"/>
    <property type="evidence" value="ECO:0007005"/>
    <property type="project" value="PomBase"/>
</dbReference>
<dbReference type="GO" id="GO:0005634">
    <property type="term" value="C:nucleus"/>
    <property type="evidence" value="ECO:0007005"/>
    <property type="project" value="PomBase"/>
</dbReference>
<dbReference type="GO" id="GO:0005524">
    <property type="term" value="F:ATP binding"/>
    <property type="evidence" value="ECO:0007669"/>
    <property type="project" value="UniProtKB-KW"/>
</dbReference>
<dbReference type="GO" id="GO:0061654">
    <property type="term" value="F:NEDD8 conjugating enzyme activity"/>
    <property type="evidence" value="ECO:0000266"/>
    <property type="project" value="PomBase"/>
</dbReference>
<dbReference type="GO" id="GO:0019788">
    <property type="term" value="F:NEDD8 transferase activity"/>
    <property type="evidence" value="ECO:0000318"/>
    <property type="project" value="GO_Central"/>
</dbReference>
<dbReference type="GO" id="GO:0045116">
    <property type="term" value="P:protein neddylation"/>
    <property type="evidence" value="ECO:0000318"/>
    <property type="project" value="GO_Central"/>
</dbReference>
<dbReference type="CDD" id="cd23794">
    <property type="entry name" value="UBCc_UBE2F_UBE2M"/>
    <property type="match status" value="1"/>
</dbReference>
<dbReference type="FunFam" id="3.10.110.10:FF:000005">
    <property type="entry name" value="NEDD8-conjugating enzyme Ubc12"/>
    <property type="match status" value="1"/>
</dbReference>
<dbReference type="Gene3D" id="3.10.110.10">
    <property type="entry name" value="Ubiquitin Conjugating Enzyme"/>
    <property type="match status" value="1"/>
</dbReference>
<dbReference type="InterPro" id="IPR000608">
    <property type="entry name" value="UBQ-conjugat_E2_core"/>
</dbReference>
<dbReference type="InterPro" id="IPR023313">
    <property type="entry name" value="UBQ-conjugating_AS"/>
</dbReference>
<dbReference type="InterPro" id="IPR016135">
    <property type="entry name" value="UBQ-conjugating_enzyme/RWD"/>
</dbReference>
<dbReference type="PANTHER" id="PTHR24068">
    <property type="entry name" value="UBIQUITIN-CONJUGATING ENZYME E2"/>
    <property type="match status" value="1"/>
</dbReference>
<dbReference type="Pfam" id="PF00179">
    <property type="entry name" value="UQ_con"/>
    <property type="match status" value="1"/>
</dbReference>
<dbReference type="SMART" id="SM00212">
    <property type="entry name" value="UBCc"/>
    <property type="match status" value="1"/>
</dbReference>
<dbReference type="SUPFAM" id="SSF54495">
    <property type="entry name" value="UBC-like"/>
    <property type="match status" value="1"/>
</dbReference>
<dbReference type="PROSITE" id="PS00183">
    <property type="entry name" value="UBC_1"/>
    <property type="match status" value="1"/>
</dbReference>
<dbReference type="PROSITE" id="PS50127">
    <property type="entry name" value="UBC_2"/>
    <property type="match status" value="1"/>
</dbReference>
<proteinExistence type="inferred from homology"/>
<sequence>MRKIWELKKKEAQKEKNASGISPAQIRIQKDVTDLEIPSTMSTSWPDPIKLNVLHLEIRPDEGYYKGGKFKFRIQIDDNYPHDPPKVKCLNKIYHPNIDIEGNVCLNILRQDWNPVLNLNSILVGLQFLFLSPNAEDPLNKEAAADLHKDPQGFASRVRTAMKGGLVNGISFDNVMA</sequence>
<accession>O74549</accession>
<comment type="function">
    <text evidence="1">Accepts the ubiquitin-like protein NEDD8/RUB1 from the UBA3-ULA1 E1 complex and catalyzes its covalent attachment to other proteins.</text>
</comment>
<comment type="catalytic activity">
    <reaction>
        <text>[E1 NEDD8-activating enzyme]-S-[NEDD8 protein]-yl-L-cysteine + [E2 NEDD8-conjugating enzyme]-L-cysteine = [E1 NEDD8-activating enzyme]-L-cysteine + [E2 NEDD8-conjugating enzyme]-S-[NEDD8-protein]-yl-L-cysteine.</text>
        <dbReference type="EC" id="2.3.2.34"/>
    </reaction>
</comment>
<comment type="pathway">
    <text>Protein modification; protein neddylation.</text>
</comment>
<comment type="similarity">
    <text evidence="2">Belongs to the ubiquitin-conjugating enzyme family. UBC12 subfamily.</text>
</comment>
<evidence type="ECO:0000250" key="1"/>
<evidence type="ECO:0000255" key="2">
    <source>
        <dbReference type="PROSITE-ProRule" id="PRU00388"/>
    </source>
</evidence>
<evidence type="ECO:0000255" key="3">
    <source>
        <dbReference type="PROSITE-ProRule" id="PRU10133"/>
    </source>
</evidence>
<keyword id="KW-0067">ATP-binding</keyword>
<keyword id="KW-0547">Nucleotide-binding</keyword>
<keyword id="KW-1185">Reference proteome</keyword>
<keyword id="KW-0808">Transferase</keyword>
<keyword id="KW-0833">Ubl conjugation pathway</keyword>
<protein>
    <recommendedName>
        <fullName>NEDD8-conjugating enzyme ubc12</fullName>
        <ecNumber>2.3.2.34</ecNumber>
    </recommendedName>
    <alternativeName>
        <fullName>RUB1-conjugating enzyme</fullName>
    </alternativeName>
    <alternativeName>
        <fullName>Ubiquitin carrier protein 12</fullName>
    </alternativeName>
</protein>
<organism>
    <name type="scientific">Schizosaccharomyces pombe (strain 972 / ATCC 24843)</name>
    <name type="common">Fission yeast</name>
    <dbReference type="NCBI Taxonomy" id="284812"/>
    <lineage>
        <taxon>Eukaryota</taxon>
        <taxon>Fungi</taxon>
        <taxon>Dikarya</taxon>
        <taxon>Ascomycota</taxon>
        <taxon>Taphrinomycotina</taxon>
        <taxon>Schizosaccharomycetes</taxon>
        <taxon>Schizosaccharomycetales</taxon>
        <taxon>Schizosaccharomycetaceae</taxon>
        <taxon>Schizosaccharomyces</taxon>
    </lineage>
</organism>